<keyword id="KW-0963">Cytoplasm</keyword>
<keyword id="KW-0396">Initiation factor</keyword>
<keyword id="KW-0597">Phosphoprotein</keyword>
<keyword id="KW-0648">Protein biosynthesis</keyword>
<keyword id="KW-1185">Reference proteome</keyword>
<proteinExistence type="inferred from homology"/>
<sequence length="910" mass="105626">MSRFFANGSESESESSEEEIQATNFNKASAFQFSDDEEEVKRVVRSTKEKRYENLTSIIKTIRNHKKIKDIPNTLSSFEDLTRAYQKALPVISKEENGITPRFYIRCLAELEDFINEVWEDREGRKNLSKNNSKSLGTLRQKVRKYIKDFEDDLSRFREAPDQESEAEDEVVALESDGGDAGDDSDAGVKPTEAAPKAVKSAPAKAAPADDDDSDDSIDWDSDSESETESSDDENQYQNMRERFLKRTTEKEEKDDDKRKDKRKEQKTKIRKRAEDDEDGEWETVVKGHVVEKPKMFEKDAEIDVPLVLAKLLEIMSARGKKRTDRRLQIDLLFELRDISDQHNLGTAVSVKIHFNIISAIYDYNQKISEPMKLEHWALLLEVMQSMMKLLLANADIIMSESVAEEHEEYATSPFYVRGCPLAAVERLDDEFVKLLKECDPHSNDYVSRLKDEVNVVKTIELVLQYFERSGTNNERCRIYLRKIEHLYYKFDPEVLKKKRGELPATTSTSVDVMDKLCKFIYAKDDTDRIRTRAILAHIYHHAMHDNWFQARDLVLMSHLQDNIDAADPATRILYNRMMANLGLCAFRQGNVKDAHHCLVDLMVTGKPKELLAQGLLPQRQHERSAEQEKIEKQRQMPFHMHINLELLECVYLVSAMLLEIPYIAAHEFDARRRMISKTFYQQLRSSERQSLVGPPESMREHVVAAAKAMRCGNWQACANFIVNKKMNTKVWDLFYESDRVREMLTKFIKEESLRTYLFTYSNVYTSISIPSLAQMYELPVPKVHSIISKMIINEELMASLDDPSETVGMHRSEPSRLQALAMQFVDKVTNLVDVNEKVFDMKQGNFFQRGNMGNRGDRGYNRNQNNQGGNWLGQRRDRNNRNRNQRGHHKNNQDRQQQQQQQVQTIDEE</sequence>
<evidence type="ECO:0000255" key="1">
    <source>
        <dbReference type="HAMAP-Rule" id="MF_03002"/>
    </source>
</evidence>
<evidence type="ECO:0000255" key="2">
    <source>
        <dbReference type="PROSITE-ProRule" id="PRU01185"/>
    </source>
</evidence>
<evidence type="ECO:0000256" key="3">
    <source>
        <dbReference type="SAM" id="MobiDB-lite"/>
    </source>
</evidence>
<name>EIF3C_DROSE</name>
<organism>
    <name type="scientific">Drosophila sechellia</name>
    <name type="common">Fruit fly</name>
    <dbReference type="NCBI Taxonomy" id="7238"/>
    <lineage>
        <taxon>Eukaryota</taxon>
        <taxon>Metazoa</taxon>
        <taxon>Ecdysozoa</taxon>
        <taxon>Arthropoda</taxon>
        <taxon>Hexapoda</taxon>
        <taxon>Insecta</taxon>
        <taxon>Pterygota</taxon>
        <taxon>Neoptera</taxon>
        <taxon>Endopterygota</taxon>
        <taxon>Diptera</taxon>
        <taxon>Brachycera</taxon>
        <taxon>Muscomorpha</taxon>
        <taxon>Ephydroidea</taxon>
        <taxon>Drosophilidae</taxon>
        <taxon>Drosophila</taxon>
        <taxon>Sophophora</taxon>
    </lineage>
</organism>
<accession>B4HMY3</accession>
<dbReference type="EMBL" id="CH480816">
    <property type="protein sequence ID" value="EDW48333.1"/>
    <property type="molecule type" value="Genomic_DNA"/>
</dbReference>
<dbReference type="SMR" id="B4HMY3"/>
<dbReference type="STRING" id="7238.B4HMY3"/>
<dbReference type="EnsemblMetazoa" id="FBtr0204793">
    <property type="protein sequence ID" value="FBpp0203285"/>
    <property type="gene ID" value="FBgn0176685"/>
</dbReference>
<dbReference type="EnsemblMetazoa" id="XM_002034284.2">
    <property type="protein sequence ID" value="XP_002034320.1"/>
    <property type="gene ID" value="LOC6609646"/>
</dbReference>
<dbReference type="GeneID" id="6609646"/>
<dbReference type="KEGG" id="dse:6609646"/>
<dbReference type="CTD" id="8663"/>
<dbReference type="HOGENOM" id="CLU_004304_0_0_1"/>
<dbReference type="OMA" id="FRCGLIK"/>
<dbReference type="OrthoDB" id="45210at7215"/>
<dbReference type="PhylomeDB" id="B4HMY3"/>
<dbReference type="ChiTaRS" id="eIF3-S8">
    <property type="organism name" value="fly"/>
</dbReference>
<dbReference type="Proteomes" id="UP000001292">
    <property type="component" value="Unassembled WGS sequence"/>
</dbReference>
<dbReference type="GO" id="GO:0016282">
    <property type="term" value="C:eukaryotic 43S preinitiation complex"/>
    <property type="evidence" value="ECO:0007669"/>
    <property type="project" value="UniProtKB-UniRule"/>
</dbReference>
<dbReference type="GO" id="GO:0033290">
    <property type="term" value="C:eukaryotic 48S preinitiation complex"/>
    <property type="evidence" value="ECO:0007669"/>
    <property type="project" value="UniProtKB-UniRule"/>
</dbReference>
<dbReference type="GO" id="GO:0005852">
    <property type="term" value="C:eukaryotic translation initiation factor 3 complex"/>
    <property type="evidence" value="ECO:0007669"/>
    <property type="project" value="UniProtKB-UniRule"/>
</dbReference>
<dbReference type="GO" id="GO:0003723">
    <property type="term" value="F:RNA binding"/>
    <property type="evidence" value="ECO:0007669"/>
    <property type="project" value="InterPro"/>
</dbReference>
<dbReference type="GO" id="GO:0003743">
    <property type="term" value="F:translation initiation factor activity"/>
    <property type="evidence" value="ECO:0007669"/>
    <property type="project" value="UniProtKB-UniRule"/>
</dbReference>
<dbReference type="GO" id="GO:0031369">
    <property type="term" value="F:translation initiation factor binding"/>
    <property type="evidence" value="ECO:0007669"/>
    <property type="project" value="InterPro"/>
</dbReference>
<dbReference type="GO" id="GO:0001732">
    <property type="term" value="P:formation of cytoplasmic translation initiation complex"/>
    <property type="evidence" value="ECO:0007669"/>
    <property type="project" value="UniProtKB-UniRule"/>
</dbReference>
<dbReference type="HAMAP" id="MF_03002">
    <property type="entry name" value="eIF3c"/>
    <property type="match status" value="1"/>
</dbReference>
<dbReference type="InterPro" id="IPR027516">
    <property type="entry name" value="EIF3C"/>
</dbReference>
<dbReference type="InterPro" id="IPR008905">
    <property type="entry name" value="EIF3C_N_dom"/>
</dbReference>
<dbReference type="InterPro" id="IPR000717">
    <property type="entry name" value="PCI_dom"/>
</dbReference>
<dbReference type="InterPro" id="IPR036390">
    <property type="entry name" value="WH_DNA-bd_sf"/>
</dbReference>
<dbReference type="PANTHER" id="PTHR13937">
    <property type="entry name" value="EUKARYOTIC TRANSLATION INITATION FACTOR 3, SUBUNIT 8 EIF3S8 -RELATED"/>
    <property type="match status" value="1"/>
</dbReference>
<dbReference type="PANTHER" id="PTHR13937:SF0">
    <property type="entry name" value="EUKARYOTIC TRANSLATION INITIATION FACTOR 3 SUBUNIT C-RELATED"/>
    <property type="match status" value="1"/>
</dbReference>
<dbReference type="Pfam" id="PF05470">
    <property type="entry name" value="eIF-3c_N"/>
    <property type="match status" value="1"/>
</dbReference>
<dbReference type="Pfam" id="PF01399">
    <property type="entry name" value="PCI"/>
    <property type="match status" value="1"/>
</dbReference>
<dbReference type="SMART" id="SM00088">
    <property type="entry name" value="PINT"/>
    <property type="match status" value="1"/>
</dbReference>
<dbReference type="SUPFAM" id="SSF46785">
    <property type="entry name" value="Winged helix' DNA-binding domain"/>
    <property type="match status" value="1"/>
</dbReference>
<dbReference type="PROSITE" id="PS50250">
    <property type="entry name" value="PCI"/>
    <property type="match status" value="1"/>
</dbReference>
<gene>
    <name evidence="1" type="primary">eIF3c</name>
    <name evidence="1" type="synonym">eIF3-S8</name>
    <name type="ORF">GM21808</name>
</gene>
<protein>
    <recommendedName>
        <fullName evidence="1">Eukaryotic translation initiation factor 3 subunit C</fullName>
        <shortName evidence="1">eIF3c</shortName>
    </recommendedName>
    <alternativeName>
        <fullName evidence="1">Eukaryotic translation initiation factor 3 subunit 8</fullName>
    </alternativeName>
</protein>
<feature type="chain" id="PRO_0000365392" description="Eukaryotic translation initiation factor 3 subunit C">
    <location>
        <begin position="1"/>
        <end position="910"/>
    </location>
</feature>
<feature type="domain" description="PCI" evidence="2">
    <location>
        <begin position="639"/>
        <end position="815"/>
    </location>
</feature>
<feature type="region of interest" description="Disordered" evidence="3">
    <location>
        <begin position="1"/>
        <end position="21"/>
    </location>
</feature>
<feature type="region of interest" description="Disordered" evidence="3">
    <location>
        <begin position="157"/>
        <end position="281"/>
    </location>
</feature>
<feature type="region of interest" description="Disordered" evidence="3">
    <location>
        <begin position="847"/>
        <end position="910"/>
    </location>
</feature>
<feature type="compositionally biased region" description="Acidic residues" evidence="3">
    <location>
        <begin position="11"/>
        <end position="20"/>
    </location>
</feature>
<feature type="compositionally biased region" description="Acidic residues" evidence="3">
    <location>
        <begin position="162"/>
        <end position="186"/>
    </location>
</feature>
<feature type="compositionally biased region" description="Low complexity" evidence="3">
    <location>
        <begin position="193"/>
        <end position="207"/>
    </location>
</feature>
<feature type="compositionally biased region" description="Acidic residues" evidence="3">
    <location>
        <begin position="209"/>
        <end position="235"/>
    </location>
</feature>
<feature type="compositionally biased region" description="Basic and acidic residues" evidence="3">
    <location>
        <begin position="240"/>
        <end position="268"/>
    </location>
</feature>
<feature type="compositionally biased region" description="Low complexity" evidence="3">
    <location>
        <begin position="862"/>
        <end position="874"/>
    </location>
</feature>
<feature type="compositionally biased region" description="Basic residues" evidence="3">
    <location>
        <begin position="882"/>
        <end position="891"/>
    </location>
</feature>
<feature type="compositionally biased region" description="Low complexity" evidence="3">
    <location>
        <begin position="895"/>
        <end position="910"/>
    </location>
</feature>
<feature type="modified residue" description="Phosphoserine" evidence="1">
    <location>
        <position position="34"/>
    </location>
</feature>
<feature type="modified residue" description="Phosphoserine" evidence="1">
    <location>
        <position position="165"/>
    </location>
</feature>
<feature type="modified residue" description="Phosphoserine" evidence="1">
    <location>
        <position position="176"/>
    </location>
</feature>
<feature type="modified residue" description="Phosphoserine" evidence="1">
    <location>
        <position position="185"/>
    </location>
</feature>
<comment type="function">
    <text evidence="1">Component of the eukaryotic translation initiation factor 3 (eIF-3) complex, which is involved in protein synthesis of a specialized repertoire of mRNAs and, together with other initiation factors, stimulates binding of mRNA and methionyl-tRNAi to the 40S ribosome. The eIF-3 complex specifically targets and initiates translation of a subset of mRNAs involved in cell proliferation.</text>
</comment>
<comment type="subunit">
    <text evidence="1">Component of the eukaryotic translation initiation factor 3 (eIF-3) complex. The eIF-3 complex interacts with pix.</text>
</comment>
<comment type="subcellular location">
    <subcellularLocation>
        <location evidence="1">Cytoplasm</location>
    </subcellularLocation>
</comment>
<comment type="similarity">
    <text evidence="1">Belongs to the eIF-3 subunit C family.</text>
</comment>
<reference key="1">
    <citation type="journal article" date="2007" name="Nature">
        <title>Evolution of genes and genomes on the Drosophila phylogeny.</title>
        <authorList>
            <consortium name="Drosophila 12 genomes consortium"/>
        </authorList>
    </citation>
    <scope>NUCLEOTIDE SEQUENCE [LARGE SCALE GENOMIC DNA]</scope>
    <source>
        <strain>Rob3c / Tucson 14021-0248.25</strain>
    </source>
</reference>